<proteinExistence type="inferred from homology"/>
<name>VP6_ROTGA</name>
<reference key="1">
    <citation type="journal article" date="1991" name="Virology">
        <title>Expression of the major inner capsid protein of the group B rotavirus ADRV: primary characterization of genome segment 5.</title>
        <authorList>
            <person name="Chen G.-M."/>
            <person name="Werner-Eckert R."/>
            <person name="Tao H."/>
            <person name="Mackow E.R."/>
        </authorList>
    </citation>
    <scope>NUCLEOTIDE SEQUENCE [GENOMIC RNA]</scope>
</reference>
<feature type="chain" id="PRO_0000149566" description="Intermediate capsid protein VP6">
    <location>
        <begin position="1"/>
        <end position="391"/>
    </location>
</feature>
<accession>P26015</accession>
<dbReference type="EMBL" id="M55982">
    <property type="protein sequence ID" value="AAA47353.1"/>
    <property type="molecule type" value="Genomic_RNA"/>
</dbReference>
<dbReference type="PIR" id="A39993">
    <property type="entry name" value="VPXRHB"/>
</dbReference>
<dbReference type="GO" id="GO:0019031">
    <property type="term" value="C:viral envelope"/>
    <property type="evidence" value="ECO:0007669"/>
    <property type="project" value="UniProtKB-UniRule"/>
</dbReference>
<dbReference type="GO" id="GO:0039626">
    <property type="term" value="C:viral intermediate capsid"/>
    <property type="evidence" value="ECO:0007669"/>
    <property type="project" value="UniProtKB-UniRule"/>
</dbReference>
<dbReference type="GO" id="GO:0046789">
    <property type="term" value="F:host cell surface receptor binding"/>
    <property type="evidence" value="ECO:0007669"/>
    <property type="project" value="UniProtKB-UniRule"/>
</dbReference>
<dbReference type="GO" id="GO:0005198">
    <property type="term" value="F:structural molecule activity"/>
    <property type="evidence" value="ECO:0007669"/>
    <property type="project" value="UniProtKB-UniRule"/>
</dbReference>
<dbReference type="GO" id="GO:0019064">
    <property type="term" value="P:fusion of virus membrane with host plasma membrane"/>
    <property type="evidence" value="ECO:0007669"/>
    <property type="project" value="UniProtKB-UniRule"/>
</dbReference>
<dbReference type="HAMAP" id="MF_04126">
    <property type="entry name" value="Rota_VP6"/>
    <property type="match status" value="1"/>
</dbReference>
<dbReference type="InterPro" id="IPR001385">
    <property type="entry name" value="Rotavirus_A/C_VP6"/>
</dbReference>
<organismHost>
    <name type="scientific">Homo sapiens</name>
    <name type="common">Human</name>
    <dbReference type="NCBI Taxonomy" id="9606"/>
</organismHost>
<keyword id="KW-0167">Capsid protein</keyword>
<keyword id="KW-1154">Intermediate capsid protein</keyword>
<keyword id="KW-0946">Virion</keyword>
<protein>
    <recommendedName>
        <fullName evidence="1">Intermediate capsid protein VP6</fullName>
    </recommendedName>
</protein>
<sequence>MDLIETVNACVKLQKRVLGLAPNTNLNTAEQSVLNDYNALPSRVNGKTYALLNQIAVYTPYTINAPIISLAVRISTDDYDDMRSGIESILDVLAAAIRTEGSRPTRVIERRVLEQNVKQLVDDLRLKSLISDLSIANLAAVDTAMIQPEVIETENPLYADIIEQIVHRPNIGMNGGNIRATLGRWSGNKGVVTCMSGMDSEHRFTVELKTRTCGIINIVYIPTAGTILIPMPAGRNREGDLIDVSAEMMADDFAIDFMDDDKIIQTETGVGVYSFPMCNRIRFRINPWNTQKDDDNLGTVHMINWAQGTAPKQPAISFMFETRRTFTEGNYQHLSRCAPKAQYMMDTQFNDVSFTNRPAVDWNIQSLLTSNTQRVWCQKIAMLIAAFAAKI</sequence>
<organism>
    <name type="scientific">Rotavirus B (isolate RVB/Human/China/ADRV/1982)</name>
    <name type="common">RV-B</name>
    <name type="synonym">Rotavirus B (isolate adult diarrhea rotavirus)</name>
    <dbReference type="NCBI Taxonomy" id="10942"/>
    <lineage>
        <taxon>Viruses</taxon>
        <taxon>Riboviria</taxon>
        <taxon>Orthornavirae</taxon>
        <taxon>Duplornaviricota</taxon>
        <taxon>Resentoviricetes</taxon>
        <taxon>Reovirales</taxon>
        <taxon>Sedoreoviridae</taxon>
        <taxon>Rotavirus</taxon>
        <taxon>Rotavirus B</taxon>
    </lineage>
</organism>
<comment type="function">
    <text evidence="1">Intermediate capsid protein that self assembles to form an icosahedral capsid with a T=13 symmetry, which consists of 230 trimers of VP6, with channels at each of its five-fold vertices. This capsid constitutes the middle concentric layer of the viral mature particle. The innermost VP2 capsid and the intermediate VP6 capsid remain intact following cell entry to protect the dsRNA from degradation and to prevent unfavorable antiviral responses in the host cell during all the replication cycle of the virus. Nascent transcripts are transcribed within the structural confines of this double-layered particle (DLP) and are extruded through the channels at the five-fold axes. VP6 is required for the transcription activity of the DLP.</text>
</comment>
<comment type="subunit">
    <text evidence="1">Homotrimer. Interacts with the inner capsid protein VP2. Interacts with the outer capsid glycoprotein VP7.</text>
</comment>
<comment type="subcellular location">
    <subcellularLocation>
        <location evidence="1">Virion</location>
    </subcellularLocation>
    <text evidence="1">Component of the intermediate capsid. Also found in spherical cytoplasmic structures, called virus factories, that appear early after infection and are the site of viral replication and packaging.</text>
</comment>
<comment type="similarity">
    <text evidence="1">Belongs to the rotavirus VP6 family.</text>
</comment>
<evidence type="ECO:0000255" key="1">
    <source>
        <dbReference type="HAMAP-Rule" id="MF_04126"/>
    </source>
</evidence>